<proteinExistence type="inferred from homology"/>
<protein>
    <recommendedName>
        <fullName evidence="1">Foldase protein PrsA</fullName>
        <ecNumber evidence="1">5.2.1.8</ecNumber>
    </recommendedName>
</protein>
<name>PRSA_STRE4</name>
<evidence type="ECO:0000255" key="1">
    <source>
        <dbReference type="HAMAP-Rule" id="MF_01145"/>
    </source>
</evidence>
<evidence type="ECO:0000256" key="2">
    <source>
        <dbReference type="SAM" id="MobiDB-lite"/>
    </source>
</evidence>
<comment type="function">
    <text evidence="1">Plays a major role in protein secretion by helping the post-translocational extracellular folding of several secreted proteins.</text>
</comment>
<comment type="catalytic activity">
    <reaction evidence="1">
        <text>[protein]-peptidylproline (omega=180) = [protein]-peptidylproline (omega=0)</text>
        <dbReference type="Rhea" id="RHEA:16237"/>
        <dbReference type="Rhea" id="RHEA-COMP:10747"/>
        <dbReference type="Rhea" id="RHEA-COMP:10748"/>
        <dbReference type="ChEBI" id="CHEBI:83833"/>
        <dbReference type="ChEBI" id="CHEBI:83834"/>
        <dbReference type="EC" id="5.2.1.8"/>
    </reaction>
</comment>
<comment type="subcellular location">
    <subcellularLocation>
        <location evidence="1">Cell membrane</location>
        <topology evidence="1">Lipid-anchor</topology>
    </subcellularLocation>
</comment>
<comment type="similarity">
    <text evidence="1">Belongs to the PrsA family.</text>
</comment>
<organism>
    <name type="scientific">Streptococcus equi subsp. equi (strain 4047)</name>
    <dbReference type="NCBI Taxonomy" id="553482"/>
    <lineage>
        <taxon>Bacteria</taxon>
        <taxon>Bacillati</taxon>
        <taxon>Bacillota</taxon>
        <taxon>Bacilli</taxon>
        <taxon>Lactobacillales</taxon>
        <taxon>Streptococcaceae</taxon>
        <taxon>Streptococcus</taxon>
    </lineage>
</organism>
<keyword id="KW-1003">Cell membrane</keyword>
<keyword id="KW-0413">Isomerase</keyword>
<keyword id="KW-0449">Lipoprotein</keyword>
<keyword id="KW-0472">Membrane</keyword>
<keyword id="KW-0564">Palmitate</keyword>
<keyword id="KW-0697">Rotamase</keyword>
<keyword id="KW-0732">Signal</keyword>
<dbReference type="EC" id="5.2.1.8" evidence="1"/>
<dbReference type="EMBL" id="FM204883">
    <property type="protein sequence ID" value="CAW93050.1"/>
    <property type="molecule type" value="Genomic_DNA"/>
</dbReference>
<dbReference type="RefSeq" id="WP_012679220.1">
    <property type="nucleotide sequence ID" value="NC_012471.1"/>
</dbReference>
<dbReference type="SMR" id="C0M9L5"/>
<dbReference type="KEGG" id="seu:SEQ_0694"/>
<dbReference type="HOGENOM" id="CLU_034646_6_0_9"/>
<dbReference type="OrthoDB" id="2194386at2"/>
<dbReference type="Proteomes" id="UP000001365">
    <property type="component" value="Chromosome"/>
</dbReference>
<dbReference type="GO" id="GO:0005886">
    <property type="term" value="C:plasma membrane"/>
    <property type="evidence" value="ECO:0007669"/>
    <property type="project" value="UniProtKB-SubCell"/>
</dbReference>
<dbReference type="GO" id="GO:0003755">
    <property type="term" value="F:peptidyl-prolyl cis-trans isomerase activity"/>
    <property type="evidence" value="ECO:0007669"/>
    <property type="project" value="UniProtKB-UniRule"/>
</dbReference>
<dbReference type="GO" id="GO:0006457">
    <property type="term" value="P:protein folding"/>
    <property type="evidence" value="ECO:0007669"/>
    <property type="project" value="UniProtKB-UniRule"/>
</dbReference>
<dbReference type="Gene3D" id="3.10.50.40">
    <property type="match status" value="1"/>
</dbReference>
<dbReference type="HAMAP" id="MF_01145">
    <property type="entry name" value="Foldase_PrsA"/>
    <property type="match status" value="1"/>
</dbReference>
<dbReference type="InterPro" id="IPR023059">
    <property type="entry name" value="Foldase_PrsA"/>
</dbReference>
<dbReference type="InterPro" id="IPR046357">
    <property type="entry name" value="PPIase_dom_sf"/>
</dbReference>
<dbReference type="InterPro" id="IPR000297">
    <property type="entry name" value="PPIase_PpiC"/>
</dbReference>
<dbReference type="InterPro" id="IPR050245">
    <property type="entry name" value="PrsA_foldase"/>
</dbReference>
<dbReference type="InterPro" id="IPR027304">
    <property type="entry name" value="Trigger_fact/SurA_dom_sf"/>
</dbReference>
<dbReference type="NCBIfam" id="NF002361">
    <property type="entry name" value="PRK01326.1"/>
    <property type="match status" value="1"/>
</dbReference>
<dbReference type="NCBIfam" id="NF009105">
    <property type="entry name" value="PRK12450.1"/>
    <property type="match status" value="1"/>
</dbReference>
<dbReference type="PANTHER" id="PTHR47245:SF1">
    <property type="entry name" value="FOLDASE PROTEIN PRSA"/>
    <property type="match status" value="1"/>
</dbReference>
<dbReference type="PANTHER" id="PTHR47245">
    <property type="entry name" value="PEPTIDYLPROLYL ISOMERASE"/>
    <property type="match status" value="1"/>
</dbReference>
<dbReference type="Pfam" id="PF13145">
    <property type="entry name" value="Rotamase_2"/>
    <property type="match status" value="1"/>
</dbReference>
<dbReference type="SUPFAM" id="SSF54534">
    <property type="entry name" value="FKBP-like"/>
    <property type="match status" value="1"/>
</dbReference>
<dbReference type="SUPFAM" id="SSF109998">
    <property type="entry name" value="Triger factor/SurA peptide-binding domain-like"/>
    <property type="match status" value="1"/>
</dbReference>
<dbReference type="PROSITE" id="PS50198">
    <property type="entry name" value="PPIC_PPIASE_2"/>
    <property type="match status" value="1"/>
</dbReference>
<dbReference type="PROSITE" id="PS51257">
    <property type="entry name" value="PROKAR_LIPOPROTEIN"/>
    <property type="match status" value="1"/>
</dbReference>
<reference key="1">
    <citation type="journal article" date="2009" name="PLoS Pathog.">
        <title>Genomic evidence for the evolution of Streptococcus equi: host restriction, increased virulence, and genetic exchange with human pathogens.</title>
        <authorList>
            <person name="Holden M.T.G."/>
            <person name="Heather Z."/>
            <person name="Paillot R."/>
            <person name="Steward K.F."/>
            <person name="Webb K."/>
            <person name="Ainslie F."/>
            <person name="Jourdan T."/>
            <person name="Bason N.C."/>
            <person name="Holroyd N.E."/>
            <person name="Mungall K."/>
            <person name="Quail M.A."/>
            <person name="Sanders M."/>
            <person name="Simmonds M."/>
            <person name="Willey D."/>
            <person name="Brooks K."/>
            <person name="Aanensen D.M."/>
            <person name="Spratt B.G."/>
            <person name="Jolley K.A."/>
            <person name="Maiden M.C.J."/>
            <person name="Kehoe M."/>
            <person name="Chanter N."/>
            <person name="Bentley S.D."/>
            <person name="Robinson C."/>
            <person name="Maskell D.J."/>
            <person name="Parkhill J."/>
            <person name="Waller A.S."/>
        </authorList>
    </citation>
    <scope>NUCLEOTIDE SEQUENCE [LARGE SCALE GENOMIC DNA]</scope>
    <source>
        <strain>4047</strain>
    </source>
</reference>
<feature type="signal peptide" evidence="1">
    <location>
        <begin position="1"/>
        <end position="22"/>
    </location>
</feature>
<feature type="chain" id="PRO_5000453274" description="Foldase protein PrsA">
    <location>
        <begin position="23"/>
        <end position="333"/>
    </location>
</feature>
<feature type="domain" description="PpiC" evidence="1">
    <location>
        <begin position="145"/>
        <end position="240"/>
    </location>
</feature>
<feature type="region of interest" description="Disordered" evidence="2">
    <location>
        <begin position="301"/>
        <end position="333"/>
    </location>
</feature>
<feature type="compositionally biased region" description="Basic and acidic residues" evidence="2">
    <location>
        <begin position="312"/>
        <end position="322"/>
    </location>
</feature>
<feature type="compositionally biased region" description="Low complexity" evidence="2">
    <location>
        <begin position="323"/>
        <end position="333"/>
    </location>
</feature>
<feature type="lipid moiety-binding region" description="N-palmitoyl cysteine" evidence="1">
    <location>
        <position position="23"/>
    </location>
</feature>
<feature type="lipid moiety-binding region" description="S-diacylglycerol cysteine" evidence="1">
    <location>
        <position position="23"/>
    </location>
</feature>
<sequence length="333" mass="36562">MKKSTKLLAGIVTLASAMTLAACQSTNDNTSVITMKGDTISVSDFYNETKNTEISQRAMLNLVVSRVFEDQYGKKVSKKRTEEAYNKSAEQYGASFSAALAQSGLTTDTYKRQIRSAMLVEYAVKEAAKKELTDADYKKAYESYTPEMTTQVTTLDNEETAKAVLGEVKAEGADFAAIAKEKTTAADKKVDYKFDSGDTKLPADVIKAASGLKEGDISEVVSVLDPATYQNKFYIVKVTKKAEKASDWKKYKKRLKEIVLAEKTQNIDFQNKVIAKALDKANVKIKDQAFANILAQYANTDKKASKANTSKSDQKSSSDSSKDSQSSKSKSEK</sequence>
<accession>C0M9L5</accession>
<gene>
    <name evidence="1" type="primary">prsA</name>
    <name type="ordered locus">SEQ_0694</name>
</gene>